<evidence type="ECO:0000255" key="1"/>
<evidence type="ECO:0000255" key="2">
    <source>
        <dbReference type="PROSITE-ProRule" id="PRU00107"/>
    </source>
</evidence>
<evidence type="ECO:0000269" key="3">
    <source>
    </source>
</evidence>
<evidence type="ECO:0000269" key="4">
    <source>
    </source>
</evidence>
<evidence type="ECO:0000269" key="5">
    <source>
    </source>
</evidence>
<evidence type="ECO:0000269" key="6">
    <source>
    </source>
</evidence>
<evidence type="ECO:0000269" key="7">
    <source>
    </source>
</evidence>
<evidence type="ECO:0000269" key="8">
    <source>
    </source>
</evidence>
<evidence type="ECO:0000269" key="9">
    <source>
    </source>
</evidence>
<evidence type="ECO:0000269" key="10">
    <source>
    </source>
</evidence>
<evidence type="ECO:0000269" key="11">
    <source>
    </source>
</evidence>
<evidence type="ECO:0000303" key="12">
    <source>
    </source>
</evidence>
<evidence type="ECO:0000303" key="13">
    <source>
    </source>
</evidence>
<evidence type="ECO:0000303" key="14">
    <source>
    </source>
</evidence>
<evidence type="ECO:0000303" key="15">
    <source>
    </source>
</evidence>
<evidence type="ECO:0000303" key="16">
    <source>
    </source>
</evidence>
<evidence type="ECO:0000305" key="17"/>
<evidence type="ECO:0000312" key="18">
    <source>
        <dbReference type="PDB" id="8DVQ"/>
    </source>
</evidence>
<evidence type="ECO:0000312" key="19">
    <source>
        <dbReference type="PDB" id="8DWZ"/>
    </source>
</evidence>
<evidence type="ECO:0007829" key="20">
    <source>
        <dbReference type="PDB" id="8DVQ"/>
    </source>
</evidence>
<accession>Q06240</accession>
<organism>
    <name type="scientific">Enterococcus faecium</name>
    <name type="common">Streptococcus faecium</name>
    <dbReference type="NCBI Taxonomy" id="1352"/>
    <lineage>
        <taxon>Bacteria</taxon>
        <taxon>Bacillati</taxon>
        <taxon>Bacillota</taxon>
        <taxon>Bacilli</taxon>
        <taxon>Lactobacillales</taxon>
        <taxon>Enterococcaceae</taxon>
        <taxon>Enterococcus</taxon>
    </lineage>
</organism>
<name>VANS_ENTFC</name>
<sequence>MVIKLKNKKNDYSKLERKLYMYIVAIVVVAIVFVLYIRSMIRGKLGDWILSILENKYDLNHLDAMKLYQYSIRNNIDIFIYVAIVISILILCRVMLSKFAKYFDEINTGIDVLIQNEDKQIELSAEMDVMEQKLNTLKRTLEKREQDAKLAEQRKNDVVMYLAHDIKTPLTSIIGYLSLLDEAPDMPVDQKAKYVHITLDKAYRLEQLIDEFFEITRYNLQTITLTKTHIDLYYMLVQMTDEFYPQLSAHGKQAVIHAPEDLTVSGDPDKLARVFNNILKNAAAYSEDNSIIDITAGLSGDVVSIEFKNTGSIPKDKLAAIFEKFYRLDNARSSDTGGAGLGLAIAKEIIVQHGGQIYAESNDNYTTFRVELPAMPDLVDKRRS</sequence>
<protein>
    <recommendedName>
        <fullName>Sensor protein VanS</fullName>
        <shortName evidence="12 16">VanS</shortName>
        <shortName evidence="13 14">VanSA</shortName>
        <ecNumber evidence="8 9">2.7.13.3</ecNumber>
    </recommendedName>
    <alternativeName>
        <fullName>Vancomycin histidine protein kinase</fullName>
    </alternativeName>
    <alternativeName>
        <fullName>Vancomycin resistance protein VanS</fullName>
    </alternativeName>
</protein>
<comment type="function">
    <text evidence="3 4 5 7 8 9 10 11">Member of the two-component regulatory system VanS/VanR (PubMed:1556077, PubMed:8494882). Functions as a sensor protein kinase which is autophosphorylated at a histidine residue in response to environmental stimuli, such as glycopeptide antibiotics (PubMed:8494882, PubMed:8664263). VanS transfers its phosphate group to transcriptional regulatory protein VanR, thereby modulating expression of target genes (PubMed:1556077, PubMed:30677074, PubMed:8161518, PubMed:8494882, PubMed:8664263). Binds directly to, and autophosphorylation activity is enhanced by, the glycopeptides vancomycin and teicoplanin, in vitro (PubMed:28511809). However it has also been reported that autophosphorylation, phosphate transfer to VanR and dephosphorylation of phospho-VanR are all unaffected by the presence of vancomycin, in vitro (PubMed:30677074). In the absence of vancomycin, negatively regulates VanR-mediated activation of vanS, vanH, vanA and vanX, probably as a result of dephosphorylating phospho-VanR (PubMed:1556077, PubMed:30677074, PubMed:8981985, PubMed:9294451). May inhibit promoter-specific DNA binding by VanR (PubMed:8161518). Involved in conferring vancomycin resistance (PubMed:1556077).</text>
</comment>
<comment type="catalytic activity">
    <reaction evidence="5 8 9">
        <text>ATP + protein L-histidine = ADP + protein N-phospho-L-histidine.</text>
        <dbReference type="EC" id="2.7.13.3"/>
    </reaction>
</comment>
<comment type="activity regulation">
    <text evidence="8">Phosphorylation of VanR inhibited by EDTA.</text>
</comment>
<comment type="subcellular location">
    <subcellularLocation>
        <location evidence="1">Membrane</location>
        <topology evidence="1">Multi-pass membrane protein</topology>
    </subcellularLocation>
</comment>
<comment type="induction">
    <text evidence="10">Up-regulated by vancomycin.</text>
</comment>
<comment type="PTM">
    <text evidence="4 5 8">Autophosphorylated.</text>
</comment>
<reference key="1">
    <citation type="journal article" date="1993" name="J. Bacteriol.">
        <title>Characterization of Tn1546, a Tn3-related transposon conferring glycopeptide resistance by synthesis of depsipeptide peptidoglycan precursors in Enterococcus faecium BM4147.</title>
        <authorList>
            <person name="Arthur M."/>
            <person name="Molinas C."/>
            <person name="Depardieu F."/>
            <person name="Courvalin P."/>
        </authorList>
    </citation>
    <scope>NUCLEOTIDE SEQUENCE [GENOMIC DNA]</scope>
    <source>
        <strain>BM4147</strain>
        <transposon>Tn1546</transposon>
    </source>
</reference>
<reference key="2">
    <citation type="journal article" date="1992" name="J. Bacteriol.">
        <title>The VanS-VanR two-component regulatory system controls synthesis of depsipeptide peptidoglycan precursors in Enterococcus faecium BM4147.</title>
        <authorList>
            <person name="Arthur M."/>
            <person name="Molinas C."/>
            <person name="Courvalin P."/>
        </authorList>
    </citation>
    <scope>NUCLEOTIDE SEQUENCE [GENOMIC DNA]</scope>
    <scope>FUNCTION</scope>
    <source>
        <strain>BM4147</strain>
    </source>
</reference>
<reference evidence="17" key="3">
    <citation type="journal article" date="1993" name="Biochemistry">
        <title>Purification and characterization of VanR and the cytosolic domain of VanS: a two-component regulatory system required for vancomycin resistance in Enterococcus faecium BM4147.</title>
        <authorList>
            <person name="Wright G.D."/>
            <person name="Holman T.R."/>
            <person name="Walsh C.T."/>
        </authorList>
    </citation>
    <scope>FUNCTION</scope>
    <scope>CATALYTIC ACTIVITY</scope>
    <scope>ACTIVITY REGULATION</scope>
    <scope>PHOSPHORYLATION</scope>
</reference>
<reference evidence="17" key="4">
    <citation type="journal article" date="1994" name="Biochemistry">
        <title>Identification of the DNA-binding site for the phosphorylated VanR protein required for vancomycin resistance in Enterococcus faecium.</title>
        <authorList>
            <person name="Holman T.R."/>
            <person name="Wu Z."/>
            <person name="Wanner B.L."/>
            <person name="Walsh C.T."/>
        </authorList>
    </citation>
    <scope>FUNCTION</scope>
</reference>
<reference evidence="17" key="5">
    <citation type="journal article" date="1996" name="Biochemistry">
        <title>Kinetic comparison of the specificity of the vancomycin resistance VanS for two response regulators, VanR and PhoB.</title>
        <authorList>
            <person name="Fisher S.L."/>
            <person name="Kim S.K."/>
            <person name="Wanner B.L."/>
            <person name="Walsh C.T."/>
        </authorList>
    </citation>
    <scope>FUNCTION</scope>
    <scope>CATALYTIC ACTIVITY</scope>
</reference>
<reference evidence="17" key="6">
    <citation type="journal article" date="1997" name="J. Bacteriol.">
        <title>The VanS sensor negatively controls VanR-mediated transcriptional activation of glycopeptide resistance genes of Tn1546 and related elements in the absence of induction.</title>
        <authorList>
            <person name="Arthur M."/>
            <person name="Depardieu F."/>
            <person name="Gerbaud G."/>
            <person name="Galimand M."/>
            <person name="Leclercq R."/>
            <person name="Courvalin P."/>
        </authorList>
    </citation>
    <scope>FUNCTION</scope>
    <scope>INDUCTION BY VANCOMYCIN</scope>
</reference>
<reference evidence="17" key="7">
    <citation type="journal article" date="1997" name="J. Bacteriol.">
        <title>Transcriptional regulation of the Enterococcus faecium BM4147 vancomycin resistance gene cluster by the VanS-VanR two-component regulatory system in Escherichia coli K-12.</title>
        <authorList>
            <person name="Haldimann A."/>
            <person name="Fisher S.L."/>
            <person name="Daniels L.L."/>
            <person name="Walsh C.T."/>
            <person name="Wanner B.L."/>
        </authorList>
    </citation>
    <scope>FUNCTION</scope>
    <scope>MUTAGENESIS OF HIS-164</scope>
</reference>
<reference evidence="17" key="8">
    <citation type="journal article" date="2017" name="Biochim. Biophys. Acta">
        <title>Characterisation of the selective binding of antibiotics vancomycin and teicoplanin by the VanS receptor regulating type A vancomycin resistance in the enterococci.</title>
        <authorList>
            <person name="Hughes C.S."/>
            <person name="Longo E."/>
            <person name="Phillips-Jones M.K."/>
            <person name="Hussain R."/>
        </authorList>
    </citation>
    <scope>FUNCTION</scope>
    <scope>PHOSPHORYLATION</scope>
</reference>
<reference evidence="17" key="9">
    <citation type="journal article" date="2019" name="PLoS ONE">
        <title>Vancomycin does not affect the enzymatic activities of purified VanSA.</title>
        <authorList>
            <person name="Upton E.C."/>
            <person name="Maciunas L.J."/>
            <person name="Loll P.J."/>
        </authorList>
    </citation>
    <scope>FUNCTION</scope>
    <scope>PHOSPHORYLATION</scope>
    <scope>MUTAGENESIS OF THR-168</scope>
</reference>
<reference evidence="18 19" key="10">
    <citation type="journal article" date="2023" name="J. Biol. Chem.">
        <title>Structure of VanS from vancomycin-resistant enterococci: A sensor kinase with weak ATP binding.</title>
        <authorList>
            <person name="Grasty K.C."/>
            <person name="Guzik C."/>
            <person name="D'Lauro E.J."/>
            <person name="Padrick S.B."/>
            <person name="Beld J."/>
            <person name="Loll P.J."/>
        </authorList>
    </citation>
    <scope>X-RAY CRYSTALLOGRAPHY (2.19 ANGSTROMS) OF 219-384</scope>
    <scope>MUTAGENESIS OF ASN-309</scope>
</reference>
<feature type="chain" id="PRO_0000074893" description="Sensor protein VanS">
    <location>
        <begin position="1"/>
        <end position="384"/>
    </location>
</feature>
<feature type="transmembrane region" description="Helical" evidence="1">
    <location>
        <begin position="21"/>
        <end position="41"/>
    </location>
</feature>
<feature type="transmembrane region" description="Helical" evidence="1">
    <location>
        <begin position="76"/>
        <end position="96"/>
    </location>
</feature>
<feature type="domain" description="Histidine kinase" evidence="2">
    <location>
        <begin position="161"/>
        <end position="376"/>
    </location>
</feature>
<feature type="region of interest" description="Involved in low-affinity ATP-binding. Exhibits higher affinity for ATP than GTP" evidence="6">
    <location>
        <begin position="221"/>
        <end position="384"/>
    </location>
</feature>
<feature type="modified residue" description="Phosphohistidine; by autocatalysis" evidence="2">
    <location>
        <position position="164"/>
    </location>
</feature>
<feature type="mutagenesis site" description="Inhibits activation of VanR by VanS." evidence="11">
    <original>H</original>
    <variation>Q</variation>
    <location>
        <position position="164"/>
    </location>
</feature>
<feature type="mutagenesis site" description="Reduces phosphatase activity, with phospho-VanR as substrate, significantly. No affect on autophosphorylation." evidence="5">
    <original>T</original>
    <variation>K</variation>
    <location>
        <position position="168"/>
    </location>
</feature>
<feature type="mutagenesis site" description="May reduce stability or perhaps induce abnormal folding of protein." evidence="6">
    <original>N</original>
    <variation>D</variation>
    <location>
        <position position="309"/>
    </location>
</feature>
<feature type="helix" evidence="20">
    <location>
        <begin position="232"/>
        <end position="248"/>
    </location>
</feature>
<feature type="turn" evidence="20">
    <location>
        <begin position="249"/>
        <end position="251"/>
    </location>
</feature>
<feature type="strand" evidence="20">
    <location>
        <begin position="253"/>
        <end position="258"/>
    </location>
</feature>
<feature type="helix" evidence="20">
    <location>
        <begin position="268"/>
        <end position="285"/>
    </location>
</feature>
<feature type="strand" evidence="20">
    <location>
        <begin position="291"/>
        <end position="299"/>
    </location>
</feature>
<feature type="strand" evidence="20">
    <location>
        <begin position="302"/>
        <end position="311"/>
    </location>
</feature>
<feature type="helix" evidence="20">
    <location>
        <begin position="315"/>
        <end position="319"/>
    </location>
</feature>
<feature type="helix" evidence="20">
    <location>
        <begin position="344"/>
        <end position="352"/>
    </location>
</feature>
<feature type="strand" evidence="20">
    <location>
        <begin position="356"/>
        <end position="361"/>
    </location>
</feature>
<feature type="strand" evidence="20">
    <location>
        <begin position="363"/>
        <end position="373"/>
    </location>
</feature>
<geneLocation type="plasmid">
    <name>pIP816</name>
</geneLocation>
<keyword id="KW-0002">3D-structure</keyword>
<keyword id="KW-0046">Antibiotic resistance</keyword>
<keyword id="KW-0067">ATP-binding</keyword>
<keyword id="KW-0961">Cell wall biogenesis/degradation</keyword>
<keyword id="KW-0418">Kinase</keyword>
<keyword id="KW-0472">Membrane</keyword>
<keyword id="KW-0547">Nucleotide-binding</keyword>
<keyword id="KW-0597">Phosphoprotein</keyword>
<keyword id="KW-0614">Plasmid</keyword>
<keyword id="KW-0808">Transferase</keyword>
<keyword id="KW-0812">Transmembrane</keyword>
<keyword id="KW-1133">Transmembrane helix</keyword>
<keyword id="KW-0902">Two-component regulatory system</keyword>
<dbReference type="EC" id="2.7.13.3" evidence="8 9"/>
<dbReference type="EMBL" id="M97297">
    <property type="protein sequence ID" value="AAA65954.1"/>
    <property type="molecule type" value="Genomic_DNA"/>
</dbReference>
<dbReference type="EMBL" id="M68910">
    <property type="protein sequence ID" value="AAA24788.1"/>
    <property type="molecule type" value="Genomic_DNA"/>
</dbReference>
<dbReference type="PIR" id="B41838">
    <property type="entry name" value="B41838"/>
</dbReference>
<dbReference type="RefSeq" id="WP_002305818.1">
    <property type="nucleotide sequence ID" value="NZ_WQKY01000109.1"/>
</dbReference>
<dbReference type="RefSeq" id="YP_001019037.1">
    <property type="nucleotide sequence ID" value="NC_008821.1"/>
</dbReference>
<dbReference type="RefSeq" id="YP_001974798.1">
    <property type="nucleotide sequence ID" value="NC_010980.1"/>
</dbReference>
<dbReference type="RefSeq" id="YP_002128397.1">
    <property type="nucleotide sequence ID" value="NC_011140.1"/>
</dbReference>
<dbReference type="RefSeq" id="YP_004172618.1">
    <property type="nucleotide sequence ID" value="NC_014959.1"/>
</dbReference>
<dbReference type="RefSeq" id="YP_976079.1">
    <property type="nucleotide sequence ID" value="NC_008768.1"/>
</dbReference>
<dbReference type="PDB" id="8DVQ">
    <property type="method" value="X-ray"/>
    <property type="resolution" value="2.19 A"/>
    <property type="chains" value="A=219-384"/>
</dbReference>
<dbReference type="PDB" id="8DWZ">
    <property type="method" value="X-ray"/>
    <property type="resolution" value="2.21 A"/>
    <property type="chains" value="A=219-384"/>
</dbReference>
<dbReference type="PDBsum" id="8DVQ"/>
<dbReference type="PDBsum" id="8DWZ"/>
<dbReference type="SMR" id="Q06240"/>
<dbReference type="CARD" id="ARO:3002931">
    <property type="molecule name" value="vanS_in_vanA_cl"/>
    <property type="mechanism identifier" value="ARO:0001001"/>
    <property type="mechanism name" value="antibiotic target alteration"/>
</dbReference>
<dbReference type="BRENDA" id="2.7.13.3">
    <property type="organism ID" value="2096"/>
</dbReference>
<dbReference type="GO" id="GO:0005886">
    <property type="term" value="C:plasma membrane"/>
    <property type="evidence" value="ECO:0007669"/>
    <property type="project" value="UniProtKB-KW"/>
</dbReference>
<dbReference type="GO" id="GO:0005524">
    <property type="term" value="F:ATP binding"/>
    <property type="evidence" value="ECO:0007669"/>
    <property type="project" value="UniProtKB-KW"/>
</dbReference>
<dbReference type="GO" id="GO:0004721">
    <property type="term" value="F:phosphoprotein phosphatase activity"/>
    <property type="evidence" value="ECO:0007669"/>
    <property type="project" value="TreeGrafter"/>
</dbReference>
<dbReference type="GO" id="GO:0000155">
    <property type="term" value="F:phosphorelay sensor kinase activity"/>
    <property type="evidence" value="ECO:0007669"/>
    <property type="project" value="InterPro"/>
</dbReference>
<dbReference type="GO" id="GO:0071555">
    <property type="term" value="P:cell wall organization"/>
    <property type="evidence" value="ECO:0007669"/>
    <property type="project" value="UniProtKB-KW"/>
</dbReference>
<dbReference type="GO" id="GO:0016036">
    <property type="term" value="P:cellular response to phosphate starvation"/>
    <property type="evidence" value="ECO:0007669"/>
    <property type="project" value="TreeGrafter"/>
</dbReference>
<dbReference type="GO" id="GO:0043433">
    <property type="term" value="P:negative regulation of DNA-binding transcription factor activity"/>
    <property type="evidence" value="ECO:0000316"/>
    <property type="project" value="CACAO"/>
</dbReference>
<dbReference type="GO" id="GO:0046677">
    <property type="term" value="P:response to antibiotic"/>
    <property type="evidence" value="ECO:0007669"/>
    <property type="project" value="UniProtKB-KW"/>
</dbReference>
<dbReference type="CDD" id="cd16923">
    <property type="entry name" value="HATPase_VanS-like"/>
    <property type="match status" value="1"/>
</dbReference>
<dbReference type="CDD" id="cd00082">
    <property type="entry name" value="HisKA"/>
    <property type="match status" value="1"/>
</dbReference>
<dbReference type="FunFam" id="3.30.565.10:FF:000013">
    <property type="entry name" value="Two-component sensor histidine kinase"/>
    <property type="match status" value="1"/>
</dbReference>
<dbReference type="Gene3D" id="1.10.287.130">
    <property type="match status" value="1"/>
</dbReference>
<dbReference type="Gene3D" id="3.30.565.10">
    <property type="entry name" value="Histidine kinase-like ATPase, C-terminal domain"/>
    <property type="match status" value="1"/>
</dbReference>
<dbReference type="InterPro" id="IPR050351">
    <property type="entry name" value="2-comp_sensor_kinase"/>
</dbReference>
<dbReference type="InterPro" id="IPR036890">
    <property type="entry name" value="HATPase_C_sf"/>
</dbReference>
<dbReference type="InterPro" id="IPR005467">
    <property type="entry name" value="His_kinase_dom"/>
</dbReference>
<dbReference type="InterPro" id="IPR003661">
    <property type="entry name" value="HisK_dim/P_dom"/>
</dbReference>
<dbReference type="InterPro" id="IPR036097">
    <property type="entry name" value="HisK_dim/P_sf"/>
</dbReference>
<dbReference type="InterPro" id="IPR004358">
    <property type="entry name" value="Sig_transdc_His_kin-like_C"/>
</dbReference>
<dbReference type="NCBIfam" id="NF033091">
    <property type="entry name" value="HK_VanS_ACDEFG"/>
    <property type="match status" value="1"/>
</dbReference>
<dbReference type="PANTHER" id="PTHR45453">
    <property type="entry name" value="PHOSPHATE REGULON SENSOR PROTEIN PHOR"/>
    <property type="match status" value="1"/>
</dbReference>
<dbReference type="PANTHER" id="PTHR45453:SF1">
    <property type="entry name" value="PHOSPHATE REGULON SENSOR PROTEIN PHOR"/>
    <property type="match status" value="1"/>
</dbReference>
<dbReference type="Pfam" id="PF02518">
    <property type="entry name" value="HATPase_c"/>
    <property type="match status" value="1"/>
</dbReference>
<dbReference type="Pfam" id="PF00512">
    <property type="entry name" value="HisKA"/>
    <property type="match status" value="1"/>
</dbReference>
<dbReference type="PRINTS" id="PR00344">
    <property type="entry name" value="BCTRLSENSOR"/>
</dbReference>
<dbReference type="SMART" id="SM00387">
    <property type="entry name" value="HATPase_c"/>
    <property type="match status" value="1"/>
</dbReference>
<dbReference type="SMART" id="SM00388">
    <property type="entry name" value="HisKA"/>
    <property type="match status" value="1"/>
</dbReference>
<dbReference type="SUPFAM" id="SSF55874">
    <property type="entry name" value="ATPase domain of HSP90 chaperone/DNA topoisomerase II/histidine kinase"/>
    <property type="match status" value="1"/>
</dbReference>
<dbReference type="SUPFAM" id="SSF47384">
    <property type="entry name" value="Homodimeric domain of signal transducing histidine kinase"/>
    <property type="match status" value="1"/>
</dbReference>
<dbReference type="PROSITE" id="PS50109">
    <property type="entry name" value="HIS_KIN"/>
    <property type="match status" value="1"/>
</dbReference>
<proteinExistence type="evidence at protein level"/>
<gene>
    <name evidence="12 15" type="primary">vanS</name>
    <name evidence="13 14" type="synonym">vanSA</name>
</gene>